<feature type="chain" id="PRO_0000280249" description="Zinc finger C2HC domain-containing protein 1A">
    <location>
        <begin position="1"/>
        <end position="327"/>
    </location>
</feature>
<feature type="zinc finger region" description="C2HC/C3H-type 1" evidence="1">
    <location>
        <begin position="13"/>
        <end position="42"/>
    </location>
</feature>
<feature type="zinc finger region" description="C2HC/C3H-type 2" evidence="1">
    <location>
        <begin position="128"/>
        <end position="157"/>
    </location>
</feature>
<feature type="region of interest" description="Disordered" evidence="2">
    <location>
        <begin position="40"/>
        <end position="96"/>
    </location>
</feature>
<feature type="region of interest" description="Disordered" evidence="2">
    <location>
        <begin position="108"/>
        <end position="131"/>
    </location>
</feature>
<feature type="region of interest" description="Disordered" evidence="2">
    <location>
        <begin position="154"/>
        <end position="271"/>
    </location>
</feature>
<feature type="compositionally biased region" description="Basic and acidic residues" evidence="2">
    <location>
        <begin position="46"/>
        <end position="56"/>
    </location>
</feature>
<feature type="compositionally biased region" description="Low complexity" evidence="2">
    <location>
        <begin position="63"/>
        <end position="76"/>
    </location>
</feature>
<feature type="compositionally biased region" description="Pro residues" evidence="2">
    <location>
        <begin position="116"/>
        <end position="125"/>
    </location>
</feature>
<feature type="compositionally biased region" description="Polar residues" evidence="2">
    <location>
        <begin position="187"/>
        <end position="199"/>
    </location>
</feature>
<feature type="compositionally biased region" description="Low complexity" evidence="2">
    <location>
        <begin position="211"/>
        <end position="229"/>
    </location>
</feature>
<feature type="compositionally biased region" description="Polar residues" evidence="2">
    <location>
        <begin position="233"/>
        <end position="245"/>
    </location>
</feature>
<feature type="compositionally biased region" description="Polar residues" evidence="2">
    <location>
        <begin position="255"/>
        <end position="267"/>
    </location>
</feature>
<feature type="binding site" evidence="1">
    <location>
        <position position="17"/>
    </location>
    <ligand>
        <name>Zn(2+)</name>
        <dbReference type="ChEBI" id="CHEBI:29105"/>
        <label>1</label>
    </ligand>
</feature>
<feature type="binding site" evidence="1">
    <location>
        <position position="20"/>
    </location>
    <ligand>
        <name>Zn(2+)</name>
        <dbReference type="ChEBI" id="CHEBI:29105"/>
        <label>1</label>
    </ligand>
</feature>
<feature type="binding site" evidence="1">
    <location>
        <position position="32"/>
    </location>
    <ligand>
        <name>Zn(2+)</name>
        <dbReference type="ChEBI" id="CHEBI:29105"/>
        <label>1</label>
    </ligand>
</feature>
<feature type="binding site" evidence="1">
    <location>
        <position position="36"/>
    </location>
    <ligand>
        <name>Zn(2+)</name>
        <dbReference type="ChEBI" id="CHEBI:29105"/>
        <label>1</label>
    </ligand>
</feature>
<feature type="binding site" evidence="1">
    <location>
        <position position="132"/>
    </location>
    <ligand>
        <name>Zn(2+)</name>
        <dbReference type="ChEBI" id="CHEBI:29105"/>
        <label>2</label>
    </ligand>
</feature>
<feature type="binding site" evidence="1">
    <location>
        <position position="135"/>
    </location>
    <ligand>
        <name>Zn(2+)</name>
        <dbReference type="ChEBI" id="CHEBI:29105"/>
        <label>2</label>
    </ligand>
</feature>
<feature type="binding site" evidence="1">
    <location>
        <position position="147"/>
    </location>
    <ligand>
        <name>Zn(2+)</name>
        <dbReference type="ChEBI" id="CHEBI:29105"/>
        <label>2</label>
    </ligand>
</feature>
<feature type="binding site" evidence="1">
    <location>
        <position position="151"/>
    </location>
    <ligand>
        <name>Zn(2+)</name>
        <dbReference type="ChEBI" id="CHEBI:29105"/>
        <label>2</label>
    </ligand>
</feature>
<protein>
    <recommendedName>
        <fullName>Zinc finger C2HC domain-containing protein 1A</fullName>
    </recommendedName>
</protein>
<organism>
    <name type="scientific">Danio rerio</name>
    <name type="common">Zebrafish</name>
    <name type="synonym">Brachydanio rerio</name>
    <dbReference type="NCBI Taxonomy" id="7955"/>
    <lineage>
        <taxon>Eukaryota</taxon>
        <taxon>Metazoa</taxon>
        <taxon>Chordata</taxon>
        <taxon>Craniata</taxon>
        <taxon>Vertebrata</taxon>
        <taxon>Euteleostomi</taxon>
        <taxon>Actinopterygii</taxon>
        <taxon>Neopterygii</taxon>
        <taxon>Teleostei</taxon>
        <taxon>Ostariophysi</taxon>
        <taxon>Cypriniformes</taxon>
        <taxon>Danionidae</taxon>
        <taxon>Danioninae</taxon>
        <taxon>Danio</taxon>
    </lineage>
</organism>
<proteinExistence type="evidence at transcript level"/>
<sequence length="327" mass="35849">MEEIEESPPTSEELVPCKICGRSFFPKVLKKHVPICQKTAAKRRKVFDSGRQRAEGTEISTVKPIKPKLQSSSSSSKSDKPEPPKKQSNWRRKHEEFIATIRAAKSINQVIKDGGPLPPPPPPSYDPDYIQCPYCQRRFGENAADRHIKFCKEQASRISNKSKLAGGDKTKPPARTQYKPPAPKKANSPTASSVSSRLPQRSAYGQGAGTGIPSSKPSSTGSIKSTPSGYSPLRNNSSSLTSPPSEGNMKPKGMVSQSSLRNPSTGIGMNKKKIQNADNCISRNDMKNENDFNYSTTGTKFCHECGTKYPVESAKFCCECGVKRMYI</sequence>
<evidence type="ECO:0000255" key="1">
    <source>
        <dbReference type="PROSITE-ProRule" id="PRU01371"/>
    </source>
</evidence>
<evidence type="ECO:0000256" key="2">
    <source>
        <dbReference type="SAM" id="MobiDB-lite"/>
    </source>
</evidence>
<evidence type="ECO:0000305" key="3"/>
<keyword id="KW-0479">Metal-binding</keyword>
<keyword id="KW-1185">Reference proteome</keyword>
<keyword id="KW-0677">Repeat</keyword>
<keyword id="KW-0862">Zinc</keyword>
<keyword id="KW-0863">Zinc-finger</keyword>
<name>ZC21A_DANRE</name>
<accession>Q7SXT7</accession>
<gene>
    <name type="primary">zc2hc1a</name>
    <name type="synonym">fam164a</name>
    <name type="ORF">zgc:63810</name>
</gene>
<dbReference type="EMBL" id="BC055250">
    <property type="protein sequence ID" value="AAH55250.1"/>
    <property type="molecule type" value="mRNA"/>
</dbReference>
<dbReference type="RefSeq" id="NP_955974.1">
    <property type="nucleotide sequence ID" value="NM_199680.1"/>
</dbReference>
<dbReference type="SMR" id="Q7SXT7"/>
<dbReference type="FunCoup" id="Q7SXT7">
    <property type="interactions" value="591"/>
</dbReference>
<dbReference type="STRING" id="7955.ENSDARP00000034439"/>
<dbReference type="PaxDb" id="7955-ENSDARP00000034439"/>
<dbReference type="GeneID" id="324412"/>
<dbReference type="KEGG" id="dre:324412"/>
<dbReference type="AGR" id="ZFIN:ZDB-GENE-030131-3132"/>
<dbReference type="CTD" id="51101"/>
<dbReference type="ZFIN" id="ZDB-GENE-030131-3132">
    <property type="gene designation" value="zc2hc1a"/>
</dbReference>
<dbReference type="eggNOG" id="KOG3940">
    <property type="taxonomic scope" value="Eukaryota"/>
</dbReference>
<dbReference type="InParanoid" id="Q7SXT7"/>
<dbReference type="OrthoDB" id="10066537at2759"/>
<dbReference type="PhylomeDB" id="Q7SXT7"/>
<dbReference type="PRO" id="PR:Q7SXT7"/>
<dbReference type="Proteomes" id="UP000000437">
    <property type="component" value="Alternate scaffold 24"/>
</dbReference>
<dbReference type="Proteomes" id="UP000000437">
    <property type="component" value="Chromosome 24"/>
</dbReference>
<dbReference type="GO" id="GO:0008270">
    <property type="term" value="F:zinc ion binding"/>
    <property type="evidence" value="ECO:0007669"/>
    <property type="project" value="UniProtKB-KW"/>
</dbReference>
<dbReference type="Gene3D" id="3.30.160.60">
    <property type="entry name" value="Classic Zinc Finger"/>
    <property type="match status" value="1"/>
</dbReference>
<dbReference type="InterPro" id="IPR026319">
    <property type="entry name" value="ZC2HC1A/B-like"/>
</dbReference>
<dbReference type="InterPro" id="IPR049899">
    <property type="entry name" value="Znf_C2HC_C3H"/>
</dbReference>
<dbReference type="PANTHER" id="PTHR13555">
    <property type="entry name" value="C2H2 ZINC FINGER CGI-62-RELATED"/>
    <property type="match status" value="1"/>
</dbReference>
<dbReference type="PANTHER" id="PTHR13555:SF25">
    <property type="entry name" value="ZINC FINGER C2HC DOMAIN-CONTAINING PROTEIN 1A"/>
    <property type="match status" value="1"/>
</dbReference>
<dbReference type="Pfam" id="PF13913">
    <property type="entry name" value="zf-C2HC_2"/>
    <property type="match status" value="2"/>
</dbReference>
<dbReference type="PROSITE" id="PS52027">
    <property type="entry name" value="ZF_C2HC_C3H"/>
    <property type="match status" value="2"/>
</dbReference>
<reference key="1">
    <citation type="submission" date="2003-07" db="EMBL/GenBank/DDBJ databases">
        <authorList>
            <consortium name="NIH - Zebrafish Gene Collection (ZGC) project"/>
        </authorList>
    </citation>
    <scope>NUCLEOTIDE SEQUENCE [LARGE SCALE MRNA]</scope>
    <source>
        <strain>AB</strain>
    </source>
</reference>
<comment type="cofactor">
    <cofactor evidence="1">
        <name>Zn(2+)</name>
        <dbReference type="ChEBI" id="CHEBI:29105"/>
    </cofactor>
</comment>
<comment type="similarity">
    <text evidence="3">Belongs to the ZC2HC1 family.</text>
</comment>